<sequence length="240" mass="27177">MSEEEKPKPKLSPALAAKMAAMKKKQEGGEEAAASQEGGEKPKAKLSPMMAARMAAKKSGDASPAPDKPKAEPVDENRDPEPHEMAYRVIKEKFGDAVSDLDNNPLMPFFTVENVDAWQAIAFFMREDERLRFDYMACLSGVDYGDGRLGVVYNFDALATHKHKLTVKVFCSKEDPRIPSVAEIWLTADWHEREAYDMYGIVFEGHPDMRRILCPDDWDGYPLRKDYKVQEVYHGIKVPY</sequence>
<organism>
    <name type="scientific">Chloroherpeton thalassium (strain ATCC 35110 / GB-78)</name>
    <dbReference type="NCBI Taxonomy" id="517418"/>
    <lineage>
        <taxon>Bacteria</taxon>
        <taxon>Pseudomonadati</taxon>
        <taxon>Chlorobiota</taxon>
        <taxon>Chlorobiia</taxon>
        <taxon>Chlorobiales</taxon>
        <taxon>Chloroherpetonaceae</taxon>
        <taxon>Chloroherpeton</taxon>
    </lineage>
</organism>
<evidence type="ECO:0000255" key="1">
    <source>
        <dbReference type="HAMAP-Rule" id="MF_01357"/>
    </source>
</evidence>
<evidence type="ECO:0000256" key="2">
    <source>
        <dbReference type="SAM" id="MobiDB-lite"/>
    </source>
</evidence>
<comment type="function">
    <text evidence="1">NDH-1 shuttles electrons from NADH, via FMN and iron-sulfur (Fe-S) centers, to quinones in the respiratory chain. The immediate electron acceptor for the enzyme in this species is believed to be a menaquinone. Couples the redox reaction to proton translocation (for every two electrons transferred, four hydrogen ions are translocated across the cytoplasmic membrane), and thus conserves the redox energy in a proton gradient.</text>
</comment>
<comment type="catalytic activity">
    <reaction evidence="1">
        <text>a quinone + NADH + 5 H(+)(in) = a quinol + NAD(+) + 4 H(+)(out)</text>
        <dbReference type="Rhea" id="RHEA:57888"/>
        <dbReference type="ChEBI" id="CHEBI:15378"/>
        <dbReference type="ChEBI" id="CHEBI:24646"/>
        <dbReference type="ChEBI" id="CHEBI:57540"/>
        <dbReference type="ChEBI" id="CHEBI:57945"/>
        <dbReference type="ChEBI" id="CHEBI:132124"/>
    </reaction>
</comment>
<comment type="subunit">
    <text evidence="1">NDH-1 is composed of 14 different subunits. Subunits NuoB, C, D, E, F, and G constitute the peripheral sector of the complex.</text>
</comment>
<comment type="subcellular location">
    <subcellularLocation>
        <location evidence="1">Cell inner membrane</location>
        <topology evidence="1">Peripheral membrane protein</topology>
        <orientation evidence="1">Cytoplasmic side</orientation>
    </subcellularLocation>
</comment>
<comment type="similarity">
    <text evidence="1">Belongs to the complex I 30 kDa subunit family.</text>
</comment>
<keyword id="KW-0997">Cell inner membrane</keyword>
<keyword id="KW-1003">Cell membrane</keyword>
<keyword id="KW-0472">Membrane</keyword>
<keyword id="KW-0520">NAD</keyword>
<keyword id="KW-0874">Quinone</keyword>
<keyword id="KW-1185">Reference proteome</keyword>
<keyword id="KW-1278">Translocase</keyword>
<keyword id="KW-0813">Transport</keyword>
<reference key="1">
    <citation type="submission" date="2008-06" db="EMBL/GenBank/DDBJ databases">
        <title>Complete sequence of Chloroherpeton thalassium ATCC 35110.</title>
        <authorList>
            <consortium name="US DOE Joint Genome Institute"/>
            <person name="Lucas S."/>
            <person name="Copeland A."/>
            <person name="Lapidus A."/>
            <person name="Glavina del Rio T."/>
            <person name="Dalin E."/>
            <person name="Tice H."/>
            <person name="Bruce D."/>
            <person name="Goodwin L."/>
            <person name="Pitluck S."/>
            <person name="Schmutz J."/>
            <person name="Larimer F."/>
            <person name="Land M."/>
            <person name="Hauser L."/>
            <person name="Kyrpides N."/>
            <person name="Mikhailova N."/>
            <person name="Liu Z."/>
            <person name="Li T."/>
            <person name="Zhao F."/>
            <person name="Overmann J."/>
            <person name="Bryant D.A."/>
            <person name="Richardson P."/>
        </authorList>
    </citation>
    <scope>NUCLEOTIDE SEQUENCE [LARGE SCALE GENOMIC DNA]</scope>
    <source>
        <strain>ATCC 35110 / GB-78</strain>
    </source>
</reference>
<name>NUOC_CHLT3</name>
<gene>
    <name evidence="1" type="primary">nuoC</name>
    <name type="ordered locus">Ctha_2563</name>
</gene>
<accession>B3QY46</accession>
<dbReference type="EC" id="7.1.1.-" evidence="1"/>
<dbReference type="EMBL" id="CP001100">
    <property type="protein sequence ID" value="ACF15012.1"/>
    <property type="molecule type" value="Genomic_DNA"/>
</dbReference>
<dbReference type="RefSeq" id="WP_012501094.1">
    <property type="nucleotide sequence ID" value="NC_011026.1"/>
</dbReference>
<dbReference type="SMR" id="B3QY46"/>
<dbReference type="STRING" id="517418.Ctha_2563"/>
<dbReference type="KEGG" id="cts:Ctha_2563"/>
<dbReference type="eggNOG" id="COG0852">
    <property type="taxonomic scope" value="Bacteria"/>
</dbReference>
<dbReference type="HOGENOM" id="CLU_042628_9_0_10"/>
<dbReference type="Proteomes" id="UP000001208">
    <property type="component" value="Chromosome"/>
</dbReference>
<dbReference type="GO" id="GO:0005886">
    <property type="term" value="C:plasma membrane"/>
    <property type="evidence" value="ECO:0007669"/>
    <property type="project" value="UniProtKB-SubCell"/>
</dbReference>
<dbReference type="GO" id="GO:0008137">
    <property type="term" value="F:NADH dehydrogenase (ubiquinone) activity"/>
    <property type="evidence" value="ECO:0007669"/>
    <property type="project" value="InterPro"/>
</dbReference>
<dbReference type="GO" id="GO:0050136">
    <property type="term" value="F:NADH:ubiquinone reductase (non-electrogenic) activity"/>
    <property type="evidence" value="ECO:0007669"/>
    <property type="project" value="UniProtKB-UniRule"/>
</dbReference>
<dbReference type="GO" id="GO:0048038">
    <property type="term" value="F:quinone binding"/>
    <property type="evidence" value="ECO:0007669"/>
    <property type="project" value="UniProtKB-KW"/>
</dbReference>
<dbReference type="Gene3D" id="3.30.460.80">
    <property type="entry name" value="NADH:ubiquinone oxidoreductase, 30kDa subunit"/>
    <property type="match status" value="1"/>
</dbReference>
<dbReference type="HAMAP" id="MF_01357">
    <property type="entry name" value="NDH1_NuoC"/>
    <property type="match status" value="1"/>
</dbReference>
<dbReference type="InterPro" id="IPR010218">
    <property type="entry name" value="NADH_DH_suC"/>
</dbReference>
<dbReference type="InterPro" id="IPR037232">
    <property type="entry name" value="NADH_quin_OxRdtase_su_C/D-like"/>
</dbReference>
<dbReference type="InterPro" id="IPR001268">
    <property type="entry name" value="NADH_UbQ_OxRdtase_30kDa_su"/>
</dbReference>
<dbReference type="InterPro" id="IPR020396">
    <property type="entry name" value="NADH_UbQ_OxRdtase_CS"/>
</dbReference>
<dbReference type="NCBIfam" id="TIGR01961">
    <property type="entry name" value="NuoC_fam"/>
    <property type="match status" value="1"/>
</dbReference>
<dbReference type="PANTHER" id="PTHR10884:SF14">
    <property type="entry name" value="NADH DEHYDROGENASE [UBIQUINONE] IRON-SULFUR PROTEIN 3, MITOCHONDRIAL"/>
    <property type="match status" value="1"/>
</dbReference>
<dbReference type="PANTHER" id="PTHR10884">
    <property type="entry name" value="NADH DEHYDROGENASE UBIQUINONE IRON-SULFUR PROTEIN 3"/>
    <property type="match status" value="1"/>
</dbReference>
<dbReference type="Pfam" id="PF00329">
    <property type="entry name" value="Complex1_30kDa"/>
    <property type="match status" value="1"/>
</dbReference>
<dbReference type="SUPFAM" id="SSF143243">
    <property type="entry name" value="Nqo5-like"/>
    <property type="match status" value="1"/>
</dbReference>
<dbReference type="PROSITE" id="PS00542">
    <property type="entry name" value="COMPLEX1_30K"/>
    <property type="match status" value="1"/>
</dbReference>
<feature type="chain" id="PRO_0000358082" description="NADH-quinone oxidoreductase subunit C">
    <location>
        <begin position="1"/>
        <end position="240"/>
    </location>
</feature>
<feature type="region of interest" description="Disordered" evidence="2">
    <location>
        <begin position="1"/>
        <end position="82"/>
    </location>
</feature>
<feature type="compositionally biased region" description="Low complexity" evidence="2">
    <location>
        <begin position="11"/>
        <end position="20"/>
    </location>
</feature>
<feature type="compositionally biased region" description="Basic and acidic residues" evidence="2">
    <location>
        <begin position="67"/>
        <end position="82"/>
    </location>
</feature>
<proteinExistence type="inferred from homology"/>
<protein>
    <recommendedName>
        <fullName evidence="1">NADH-quinone oxidoreductase subunit C</fullName>
        <ecNumber evidence="1">7.1.1.-</ecNumber>
    </recommendedName>
    <alternativeName>
        <fullName evidence="1">NADH dehydrogenase I subunit C</fullName>
    </alternativeName>
    <alternativeName>
        <fullName evidence="1">NDH-1 subunit C</fullName>
    </alternativeName>
</protein>